<accession>P0DF42</accession>
<accession>Q879M4</accession>
<accession>Q8K8N5</accession>
<proteinExistence type="inferred from homology"/>
<feature type="chain" id="PRO_0000171531" description="Small ribosomal subunit biogenesis GTPase RsgA">
    <location>
        <begin position="1"/>
        <end position="290"/>
    </location>
</feature>
<feature type="domain" description="CP-type G" evidence="2">
    <location>
        <begin position="62"/>
        <end position="213"/>
    </location>
</feature>
<feature type="binding site" evidence="1">
    <location>
        <begin position="111"/>
        <end position="114"/>
    </location>
    <ligand>
        <name>GTP</name>
        <dbReference type="ChEBI" id="CHEBI:37565"/>
    </ligand>
</feature>
<feature type="binding site" evidence="1">
    <location>
        <begin position="156"/>
        <end position="164"/>
    </location>
    <ligand>
        <name>GTP</name>
        <dbReference type="ChEBI" id="CHEBI:37565"/>
    </ligand>
</feature>
<feature type="binding site" evidence="1">
    <location>
        <position position="237"/>
    </location>
    <ligand>
        <name>Zn(2+)</name>
        <dbReference type="ChEBI" id="CHEBI:29105"/>
    </ligand>
</feature>
<feature type="binding site" evidence="1">
    <location>
        <position position="242"/>
    </location>
    <ligand>
        <name>Zn(2+)</name>
        <dbReference type="ChEBI" id="CHEBI:29105"/>
    </ligand>
</feature>
<feature type="binding site" evidence="1">
    <location>
        <position position="244"/>
    </location>
    <ligand>
        <name>Zn(2+)</name>
        <dbReference type="ChEBI" id="CHEBI:29105"/>
    </ligand>
</feature>
<feature type="binding site" evidence="1">
    <location>
        <position position="250"/>
    </location>
    <ligand>
        <name>Zn(2+)</name>
        <dbReference type="ChEBI" id="CHEBI:29105"/>
    </ligand>
</feature>
<gene>
    <name evidence="1" type="primary">rsgA</name>
    <name type="ordered locus">SpyM3_0191</name>
</gene>
<comment type="function">
    <text evidence="1">One of several proteins that assist in the late maturation steps of the functional core of the 30S ribosomal subunit. Helps release RbfA from mature subunits. May play a role in the assembly of ribosomal proteins into the subunit. Circularly permuted GTPase that catalyzes slow GTP hydrolysis, GTPase activity is stimulated by the 30S ribosomal subunit.</text>
</comment>
<comment type="cofactor">
    <cofactor evidence="1">
        <name>Zn(2+)</name>
        <dbReference type="ChEBI" id="CHEBI:29105"/>
    </cofactor>
    <text evidence="1">Binds 1 zinc ion per subunit.</text>
</comment>
<comment type="subunit">
    <text evidence="1">Monomer. Associates with 30S ribosomal subunit, binds 16S rRNA.</text>
</comment>
<comment type="subcellular location">
    <subcellularLocation>
        <location evidence="1">Cytoplasm</location>
    </subcellularLocation>
</comment>
<comment type="similarity">
    <text evidence="1">Belongs to the TRAFAC class YlqF/YawG GTPase family. RsgA subfamily.</text>
</comment>
<comment type="sequence caution" evidence="3">
    <conflict type="erroneous initiation">
        <sequence resource="EMBL-CDS" id="AAM78798"/>
    </conflict>
    <text>Truncated N-terminus.</text>
</comment>
<organism>
    <name type="scientific">Streptococcus pyogenes serotype M3 (strain ATCC BAA-595 / MGAS315)</name>
    <dbReference type="NCBI Taxonomy" id="198466"/>
    <lineage>
        <taxon>Bacteria</taxon>
        <taxon>Bacillati</taxon>
        <taxon>Bacillota</taxon>
        <taxon>Bacilli</taxon>
        <taxon>Lactobacillales</taxon>
        <taxon>Streptococcaceae</taxon>
        <taxon>Streptococcus</taxon>
    </lineage>
</organism>
<dbReference type="EC" id="3.6.1.-" evidence="1"/>
<dbReference type="EMBL" id="AE014074">
    <property type="protein sequence ID" value="AAM78798.1"/>
    <property type="status" value="ALT_INIT"/>
    <property type="molecule type" value="Genomic_DNA"/>
</dbReference>
<dbReference type="RefSeq" id="WP_011054174.1">
    <property type="nucleotide sequence ID" value="NC_004070.1"/>
</dbReference>
<dbReference type="SMR" id="P0DF42"/>
<dbReference type="KEGG" id="spg:SpyM3_0191"/>
<dbReference type="HOGENOM" id="CLU_033617_2_1_9"/>
<dbReference type="Proteomes" id="UP000000564">
    <property type="component" value="Chromosome"/>
</dbReference>
<dbReference type="GO" id="GO:0005737">
    <property type="term" value="C:cytoplasm"/>
    <property type="evidence" value="ECO:0007669"/>
    <property type="project" value="UniProtKB-SubCell"/>
</dbReference>
<dbReference type="GO" id="GO:0005525">
    <property type="term" value="F:GTP binding"/>
    <property type="evidence" value="ECO:0007669"/>
    <property type="project" value="UniProtKB-UniRule"/>
</dbReference>
<dbReference type="GO" id="GO:0003924">
    <property type="term" value="F:GTPase activity"/>
    <property type="evidence" value="ECO:0007669"/>
    <property type="project" value="UniProtKB-UniRule"/>
</dbReference>
<dbReference type="GO" id="GO:0046872">
    <property type="term" value="F:metal ion binding"/>
    <property type="evidence" value="ECO:0007669"/>
    <property type="project" value="UniProtKB-KW"/>
</dbReference>
<dbReference type="GO" id="GO:0019843">
    <property type="term" value="F:rRNA binding"/>
    <property type="evidence" value="ECO:0007669"/>
    <property type="project" value="UniProtKB-KW"/>
</dbReference>
<dbReference type="GO" id="GO:0042274">
    <property type="term" value="P:ribosomal small subunit biogenesis"/>
    <property type="evidence" value="ECO:0007669"/>
    <property type="project" value="UniProtKB-UniRule"/>
</dbReference>
<dbReference type="CDD" id="cd04466">
    <property type="entry name" value="S1_YloQ_GTPase"/>
    <property type="match status" value="1"/>
</dbReference>
<dbReference type="CDD" id="cd01854">
    <property type="entry name" value="YjeQ_EngC"/>
    <property type="match status" value="1"/>
</dbReference>
<dbReference type="Gene3D" id="2.40.50.140">
    <property type="entry name" value="Nucleic acid-binding proteins"/>
    <property type="match status" value="1"/>
</dbReference>
<dbReference type="Gene3D" id="3.40.50.300">
    <property type="entry name" value="P-loop containing nucleotide triphosphate hydrolases"/>
    <property type="match status" value="1"/>
</dbReference>
<dbReference type="Gene3D" id="1.10.40.50">
    <property type="entry name" value="Probable gtpase engc, domain 3"/>
    <property type="match status" value="1"/>
</dbReference>
<dbReference type="HAMAP" id="MF_01820">
    <property type="entry name" value="GTPase_RsgA"/>
    <property type="match status" value="1"/>
</dbReference>
<dbReference type="InterPro" id="IPR030378">
    <property type="entry name" value="G_CP_dom"/>
</dbReference>
<dbReference type="InterPro" id="IPR012340">
    <property type="entry name" value="NA-bd_OB-fold"/>
</dbReference>
<dbReference type="InterPro" id="IPR027417">
    <property type="entry name" value="P-loop_NTPase"/>
</dbReference>
<dbReference type="InterPro" id="IPR004881">
    <property type="entry name" value="Ribosome_biogen_GTPase_RsgA"/>
</dbReference>
<dbReference type="InterPro" id="IPR010914">
    <property type="entry name" value="RsgA_GTPase_dom"/>
</dbReference>
<dbReference type="InterPro" id="IPR031944">
    <property type="entry name" value="RsgA_N"/>
</dbReference>
<dbReference type="NCBIfam" id="TIGR00157">
    <property type="entry name" value="ribosome small subunit-dependent GTPase A"/>
    <property type="match status" value="1"/>
</dbReference>
<dbReference type="PANTHER" id="PTHR32120">
    <property type="entry name" value="SMALL RIBOSOMAL SUBUNIT BIOGENESIS GTPASE RSGA"/>
    <property type="match status" value="1"/>
</dbReference>
<dbReference type="PANTHER" id="PTHR32120:SF11">
    <property type="entry name" value="SMALL RIBOSOMAL SUBUNIT BIOGENESIS GTPASE RSGA 1, MITOCHONDRIAL-RELATED"/>
    <property type="match status" value="1"/>
</dbReference>
<dbReference type="Pfam" id="PF03193">
    <property type="entry name" value="RsgA_GTPase"/>
    <property type="match status" value="1"/>
</dbReference>
<dbReference type="Pfam" id="PF16745">
    <property type="entry name" value="RsgA_N"/>
    <property type="match status" value="1"/>
</dbReference>
<dbReference type="SUPFAM" id="SSF50249">
    <property type="entry name" value="Nucleic acid-binding proteins"/>
    <property type="match status" value="1"/>
</dbReference>
<dbReference type="SUPFAM" id="SSF52540">
    <property type="entry name" value="P-loop containing nucleoside triphosphate hydrolases"/>
    <property type="match status" value="1"/>
</dbReference>
<dbReference type="PROSITE" id="PS50936">
    <property type="entry name" value="ENGC_GTPASE"/>
    <property type="match status" value="1"/>
</dbReference>
<dbReference type="PROSITE" id="PS51721">
    <property type="entry name" value="G_CP"/>
    <property type="match status" value="1"/>
</dbReference>
<keyword id="KW-0963">Cytoplasm</keyword>
<keyword id="KW-0342">GTP-binding</keyword>
<keyword id="KW-0378">Hydrolase</keyword>
<keyword id="KW-0479">Metal-binding</keyword>
<keyword id="KW-0547">Nucleotide-binding</keyword>
<keyword id="KW-0690">Ribosome biogenesis</keyword>
<keyword id="KW-0694">RNA-binding</keyword>
<keyword id="KW-0699">rRNA-binding</keyword>
<keyword id="KW-0862">Zinc</keyword>
<evidence type="ECO:0000255" key="1">
    <source>
        <dbReference type="HAMAP-Rule" id="MF_01820"/>
    </source>
</evidence>
<evidence type="ECO:0000255" key="2">
    <source>
        <dbReference type="PROSITE-ProRule" id="PRU01058"/>
    </source>
</evidence>
<evidence type="ECO:0000305" key="3"/>
<reference key="1">
    <citation type="journal article" date="2002" name="Proc. Natl. Acad. Sci. U.S.A.">
        <title>Genome sequence of a serotype M3 strain of group A Streptococcus: phage-encoded toxins, the high-virulence phenotype, and clone emergence.</title>
        <authorList>
            <person name="Beres S.B."/>
            <person name="Sylva G.L."/>
            <person name="Barbian K.D."/>
            <person name="Lei B."/>
            <person name="Hoff J.S."/>
            <person name="Mammarella N.D."/>
            <person name="Liu M.-Y."/>
            <person name="Smoot J.C."/>
            <person name="Porcella S.F."/>
            <person name="Parkins L.D."/>
            <person name="Campbell D.S."/>
            <person name="Smith T.M."/>
            <person name="McCormick J.K."/>
            <person name="Leung D.Y.M."/>
            <person name="Schlievert P.M."/>
            <person name="Musser J.M."/>
        </authorList>
    </citation>
    <scope>NUCLEOTIDE SEQUENCE [LARGE SCALE GENOMIC DNA]</scope>
    <source>
        <strain>ATCC BAA-595 / MGAS315</strain>
    </source>
</reference>
<protein>
    <recommendedName>
        <fullName evidence="1">Small ribosomal subunit biogenesis GTPase RsgA</fullName>
        <ecNumber evidence="1">3.6.1.-</ecNumber>
    </recommendedName>
</protein>
<sequence>MQGKIIKSLAGFYYVESEGQVYQTRARGNFRKRGETPYVGDIVDFSAEDNSEGYILAIYPRKNSLVRPPIVNIDQAVVIMSAKEPEFNSNLLDRFLILLEHKAIHPVVYISKMDLLDSPEEIKAIGRQYQAIGYDFVTSLEELLPLLADKITVFMGQTGVGKSTLLNRIAPELALETGEISDSLGRGRHTTRAVSFYNTHGGKIADTPGFSSLDYDIANAEDLNEAFPELRRLSHECKFRSCTHTHEPKCAVKAALETGELWPVRYEHYLQFLSEIENRRETYKKVIKRK</sequence>
<name>RSGA_STRP3</name>